<organism>
    <name type="scientific">Aspergillus clavatus (strain ATCC 1007 / CBS 513.65 / DSM 816 / NCTC 3887 / NRRL 1 / QM 1276 / 107)</name>
    <dbReference type="NCBI Taxonomy" id="344612"/>
    <lineage>
        <taxon>Eukaryota</taxon>
        <taxon>Fungi</taxon>
        <taxon>Dikarya</taxon>
        <taxon>Ascomycota</taxon>
        <taxon>Pezizomycotina</taxon>
        <taxon>Eurotiomycetes</taxon>
        <taxon>Eurotiomycetidae</taxon>
        <taxon>Eurotiales</taxon>
        <taxon>Aspergillaceae</taxon>
        <taxon>Aspergillus</taxon>
        <taxon>Aspergillus subgen. Fumigati</taxon>
    </lineage>
</organism>
<keyword id="KW-0010">Activator</keyword>
<keyword id="KW-0175">Coiled coil</keyword>
<keyword id="KW-0539">Nucleus</keyword>
<keyword id="KW-1185">Reference proteome</keyword>
<keyword id="KW-0804">Transcription</keyword>
<keyword id="KW-0805">Transcription regulation</keyword>
<dbReference type="EMBL" id="DS027057">
    <property type="protein sequence ID" value="EAW09064.1"/>
    <property type="molecule type" value="Genomic_DNA"/>
</dbReference>
<dbReference type="RefSeq" id="XP_001270490.1">
    <property type="nucleotide sequence ID" value="XM_001270489.1"/>
</dbReference>
<dbReference type="SMR" id="A1CLT5"/>
<dbReference type="STRING" id="344612.A1CLT5"/>
<dbReference type="EnsemblFungi" id="EAW09064">
    <property type="protein sequence ID" value="EAW09064"/>
    <property type="gene ID" value="ACLA_078120"/>
</dbReference>
<dbReference type="GeneID" id="4702668"/>
<dbReference type="KEGG" id="act:ACLA_078120"/>
<dbReference type="VEuPathDB" id="FungiDB:ACLA_078120"/>
<dbReference type="eggNOG" id="ENOG502QS9H">
    <property type="taxonomic scope" value="Eukaryota"/>
</dbReference>
<dbReference type="HOGENOM" id="CLU_015164_1_0_1"/>
<dbReference type="OMA" id="AAETKYW"/>
<dbReference type="OrthoDB" id="5319830at2759"/>
<dbReference type="Proteomes" id="UP000006701">
    <property type="component" value="Unassembled WGS sequence"/>
</dbReference>
<dbReference type="GO" id="GO:0070847">
    <property type="term" value="C:core mediator complex"/>
    <property type="evidence" value="ECO:0007669"/>
    <property type="project" value="TreeGrafter"/>
</dbReference>
<dbReference type="GO" id="GO:0016592">
    <property type="term" value="C:mediator complex"/>
    <property type="evidence" value="ECO:0007669"/>
    <property type="project" value="InterPro"/>
</dbReference>
<dbReference type="GO" id="GO:0003712">
    <property type="term" value="F:transcription coregulator activity"/>
    <property type="evidence" value="ECO:0007669"/>
    <property type="project" value="InterPro"/>
</dbReference>
<dbReference type="GO" id="GO:0006357">
    <property type="term" value="P:regulation of transcription by RNA polymerase II"/>
    <property type="evidence" value="ECO:0007669"/>
    <property type="project" value="InterPro"/>
</dbReference>
<dbReference type="Gene3D" id="6.10.250.2620">
    <property type="match status" value="1"/>
</dbReference>
<dbReference type="InterPro" id="IPR019313">
    <property type="entry name" value="Mediator_Med17"/>
</dbReference>
<dbReference type="PANTHER" id="PTHR13114">
    <property type="entry name" value="MEDIATOR OF RNA POLYMERASE II TRANSCRIPTION SUBUNIT 17"/>
    <property type="match status" value="1"/>
</dbReference>
<dbReference type="PANTHER" id="PTHR13114:SF7">
    <property type="entry name" value="MEDIATOR OF RNA POLYMERASE II TRANSCRIPTION SUBUNIT 17"/>
    <property type="match status" value="1"/>
</dbReference>
<dbReference type="Pfam" id="PF10156">
    <property type="entry name" value="Med17"/>
    <property type="match status" value="1"/>
</dbReference>
<accession>A1CLT5</accession>
<sequence length="641" mass="71618">MSDQFTLPLRPLIEERDHQDLLPVEIAQISAQWGSFRDVNEETLRAKIEEEKNKEYTIDDEEGEGASVDLDTTERLDQLYKKRAEITQFAMQAHMEAMFALDFISLLLSKYTPRQAETSMSAFLKQVAPLGSLTAELVNPPPKSEAAVRDAKAVSRGWRLQSFNAAADKLLKSAARLETEVASETRYWSEVLAVKDKGWKVCRLPREGQALGVQYGFLEATPIFRDRGLAALRRSEDGGLILDKGLVPAKAKTVRVRVKNRGVVTGCSKPYRSAVQDSESIEGRILQARDTLYEEELFYELVREARIMGSQGVSTGQNLVQFSVSEDEEVLLDLVDPDVAYADDSETSLEHTVVADALAHSIRILLSYAHRQNRRRRTQPPPPLTQKRRHVPEYLLLRPTMAYLQHSFHVRWLESFLGDVYGVLRAAGLESKFTATPYASVDLAHIDRSVPTVEGLVKQFLLPLESTFSADLITPQTSFNVKTRTNLLVPPFGTHFEIALNMPHYPDVQPPSRIGQHDQVAMMVTHFLLLDIVSTISHGQGQPVKSETKTTPLSWEVTYPHHGELLAVASDGRQKKMKVQLSRSELSVQMFETHGTDSYSRLVGAEGGMLPLPSQSQTWTADAATPHPSLMEFVASVSKSA</sequence>
<name>MED17_ASPCL</name>
<reference key="1">
    <citation type="journal article" date="2008" name="PLoS Genet.">
        <title>Genomic islands in the pathogenic filamentous fungus Aspergillus fumigatus.</title>
        <authorList>
            <person name="Fedorova N.D."/>
            <person name="Khaldi N."/>
            <person name="Joardar V.S."/>
            <person name="Maiti R."/>
            <person name="Amedeo P."/>
            <person name="Anderson M.J."/>
            <person name="Crabtree J."/>
            <person name="Silva J.C."/>
            <person name="Badger J.H."/>
            <person name="Albarraq A."/>
            <person name="Angiuoli S."/>
            <person name="Bussey H."/>
            <person name="Bowyer P."/>
            <person name="Cotty P.J."/>
            <person name="Dyer P.S."/>
            <person name="Egan A."/>
            <person name="Galens K."/>
            <person name="Fraser-Liggett C.M."/>
            <person name="Haas B.J."/>
            <person name="Inman J.M."/>
            <person name="Kent R."/>
            <person name="Lemieux S."/>
            <person name="Malavazi I."/>
            <person name="Orvis J."/>
            <person name="Roemer T."/>
            <person name="Ronning C.M."/>
            <person name="Sundaram J.P."/>
            <person name="Sutton G."/>
            <person name="Turner G."/>
            <person name="Venter J.C."/>
            <person name="White O.R."/>
            <person name="Whitty B.R."/>
            <person name="Youngman P."/>
            <person name="Wolfe K.H."/>
            <person name="Goldman G.H."/>
            <person name="Wortman J.R."/>
            <person name="Jiang B."/>
            <person name="Denning D.W."/>
            <person name="Nierman W.C."/>
        </authorList>
    </citation>
    <scope>NUCLEOTIDE SEQUENCE [LARGE SCALE GENOMIC DNA]</scope>
    <source>
        <strain>ATCC 1007 / CBS 513.65 / DSM 816 / NCTC 3887 / NRRL 1 / QM 1276 / 107</strain>
    </source>
</reference>
<feature type="chain" id="PRO_0000304709" description="Mediator of RNA polymerase II transcription subunit 17">
    <location>
        <begin position="1"/>
        <end position="641"/>
    </location>
</feature>
<feature type="coiled-coil region" evidence="2">
    <location>
        <begin position="159"/>
        <end position="186"/>
    </location>
</feature>
<protein>
    <recommendedName>
        <fullName>Mediator of RNA polymerase II transcription subunit 17</fullName>
    </recommendedName>
    <alternativeName>
        <fullName>Mediator complex subunit 17</fullName>
    </alternativeName>
</protein>
<comment type="function">
    <text evidence="1">Component of the Mediator complex, a coactivator involved in the regulated transcription of nearly all RNA polymerase II-dependent genes. Mediator functions as a bridge to convey information from gene-specific regulatory proteins to the basal RNA polymerase II transcription machinery. Mediator is recruited to promoters by direct interactions with regulatory proteins and serves as a scaffold for the assembly of a functional preinitiation complex with RNA polymerase II and the general transcription factors (By similarity).</text>
</comment>
<comment type="subunit">
    <text evidence="1">Component of the Mediator complex.</text>
</comment>
<comment type="subcellular location">
    <subcellularLocation>
        <location evidence="1">Nucleus</location>
    </subcellularLocation>
</comment>
<comment type="similarity">
    <text evidence="3">Belongs to the Mediator complex subunit 17 family.</text>
</comment>
<gene>
    <name type="primary">srb4</name>
    <name type="synonym">med17</name>
    <name type="ORF">ACLA_078120</name>
</gene>
<evidence type="ECO:0000250" key="1"/>
<evidence type="ECO:0000255" key="2"/>
<evidence type="ECO:0000305" key="3"/>
<proteinExistence type="inferred from homology"/>